<accession>Q74IQ6</accession>
<proteinExistence type="inferred from homology"/>
<feature type="chain" id="PRO_0000060392" description="tRNA (guanine-N(1)-)-methyltransferase">
    <location>
        <begin position="1"/>
        <end position="240"/>
    </location>
</feature>
<feature type="binding site" evidence="1">
    <location>
        <position position="108"/>
    </location>
    <ligand>
        <name>S-adenosyl-L-methionine</name>
        <dbReference type="ChEBI" id="CHEBI:59789"/>
    </ligand>
</feature>
<feature type="binding site" evidence="1">
    <location>
        <begin position="127"/>
        <end position="132"/>
    </location>
    <ligand>
        <name>S-adenosyl-L-methionine</name>
        <dbReference type="ChEBI" id="CHEBI:59789"/>
    </ligand>
</feature>
<organism>
    <name type="scientific">Lactobacillus johnsonii (strain CNCM I-12250 / La1 / NCC 533)</name>
    <dbReference type="NCBI Taxonomy" id="257314"/>
    <lineage>
        <taxon>Bacteria</taxon>
        <taxon>Bacillati</taxon>
        <taxon>Bacillota</taxon>
        <taxon>Bacilli</taxon>
        <taxon>Lactobacillales</taxon>
        <taxon>Lactobacillaceae</taxon>
        <taxon>Lactobacillus</taxon>
    </lineage>
</organism>
<evidence type="ECO:0000255" key="1">
    <source>
        <dbReference type="HAMAP-Rule" id="MF_00605"/>
    </source>
</evidence>
<name>TRMD_LACJO</name>
<reference key="1">
    <citation type="journal article" date="2004" name="Proc. Natl. Acad. Sci. U.S.A.">
        <title>The genome sequence of the probiotic intestinal bacterium Lactobacillus johnsonii NCC 533.</title>
        <authorList>
            <person name="Pridmore R.D."/>
            <person name="Berger B."/>
            <person name="Desiere F."/>
            <person name="Vilanova D."/>
            <person name="Barretto C."/>
            <person name="Pittet A.-C."/>
            <person name="Zwahlen M.-C."/>
            <person name="Rouvet M."/>
            <person name="Altermann E."/>
            <person name="Barrangou R."/>
            <person name="Mollet B."/>
            <person name="Mercenier A."/>
            <person name="Klaenhammer T."/>
            <person name="Arigoni F."/>
            <person name="Schell M.A."/>
        </authorList>
    </citation>
    <scope>NUCLEOTIDE SEQUENCE [LARGE SCALE GENOMIC DNA]</scope>
    <source>
        <strain>CNCM I-1225 / La1 / NCC 533</strain>
    </source>
</reference>
<sequence>MKINVLTLFPDMFTPLQVSMLGRGLEDKKWELNLVNFRDFTSDVHHHVDDTPYGGGAGMVLQIMPIKKALDSLTNKGKVIITAPQGKTFNEKMAQDWSKEENLTFICGHYEGFDQRIYDLADETVSIGDYVLTGGELPTMSMIDATVRLLPGILGNSASPVEESFSHGLLEYPQYTRPADFEGQKVPEVLTSGNHQKIAEWRHKEALRATYLYRPDMLADRELTDEEKRMLEEIKSEKEN</sequence>
<keyword id="KW-0963">Cytoplasm</keyword>
<keyword id="KW-0489">Methyltransferase</keyword>
<keyword id="KW-0949">S-adenosyl-L-methionine</keyword>
<keyword id="KW-0808">Transferase</keyword>
<keyword id="KW-0819">tRNA processing</keyword>
<comment type="function">
    <text evidence="1">Specifically methylates guanosine-37 in various tRNAs.</text>
</comment>
<comment type="catalytic activity">
    <reaction evidence="1">
        <text>guanosine(37) in tRNA + S-adenosyl-L-methionine = N(1)-methylguanosine(37) in tRNA + S-adenosyl-L-homocysteine + H(+)</text>
        <dbReference type="Rhea" id="RHEA:36899"/>
        <dbReference type="Rhea" id="RHEA-COMP:10145"/>
        <dbReference type="Rhea" id="RHEA-COMP:10147"/>
        <dbReference type="ChEBI" id="CHEBI:15378"/>
        <dbReference type="ChEBI" id="CHEBI:57856"/>
        <dbReference type="ChEBI" id="CHEBI:59789"/>
        <dbReference type="ChEBI" id="CHEBI:73542"/>
        <dbReference type="ChEBI" id="CHEBI:74269"/>
        <dbReference type="EC" id="2.1.1.228"/>
    </reaction>
</comment>
<comment type="subunit">
    <text evidence="1">Homodimer.</text>
</comment>
<comment type="subcellular location">
    <subcellularLocation>
        <location evidence="1">Cytoplasm</location>
    </subcellularLocation>
</comment>
<comment type="similarity">
    <text evidence="1">Belongs to the RNA methyltransferase TrmD family.</text>
</comment>
<protein>
    <recommendedName>
        <fullName evidence="1">tRNA (guanine-N(1)-)-methyltransferase</fullName>
        <ecNumber evidence="1">2.1.1.228</ecNumber>
    </recommendedName>
    <alternativeName>
        <fullName evidence="1">M1G-methyltransferase</fullName>
    </alternativeName>
    <alternativeName>
        <fullName evidence="1">tRNA [GM37] methyltransferase</fullName>
    </alternativeName>
</protein>
<dbReference type="EC" id="2.1.1.228" evidence="1"/>
<dbReference type="EMBL" id="AE017198">
    <property type="protein sequence ID" value="AAS09281.1"/>
    <property type="molecule type" value="Genomic_DNA"/>
</dbReference>
<dbReference type="RefSeq" id="WP_004895296.1">
    <property type="nucleotide sequence ID" value="NC_005362.1"/>
</dbReference>
<dbReference type="SMR" id="Q74IQ6"/>
<dbReference type="KEGG" id="ljo:LJ_1513"/>
<dbReference type="eggNOG" id="COG0336">
    <property type="taxonomic scope" value="Bacteria"/>
</dbReference>
<dbReference type="HOGENOM" id="CLU_047363_0_1_9"/>
<dbReference type="Proteomes" id="UP000000581">
    <property type="component" value="Chromosome"/>
</dbReference>
<dbReference type="GO" id="GO:0005829">
    <property type="term" value="C:cytosol"/>
    <property type="evidence" value="ECO:0007669"/>
    <property type="project" value="TreeGrafter"/>
</dbReference>
<dbReference type="GO" id="GO:0052906">
    <property type="term" value="F:tRNA (guanine(37)-N1)-methyltransferase activity"/>
    <property type="evidence" value="ECO:0007669"/>
    <property type="project" value="UniProtKB-UniRule"/>
</dbReference>
<dbReference type="GO" id="GO:0002939">
    <property type="term" value="P:tRNA N1-guanine methylation"/>
    <property type="evidence" value="ECO:0007669"/>
    <property type="project" value="TreeGrafter"/>
</dbReference>
<dbReference type="CDD" id="cd18080">
    <property type="entry name" value="TrmD-like"/>
    <property type="match status" value="1"/>
</dbReference>
<dbReference type="FunFam" id="1.10.1270.20:FF:000001">
    <property type="entry name" value="tRNA (guanine-N(1)-)-methyltransferase"/>
    <property type="match status" value="1"/>
</dbReference>
<dbReference type="FunFam" id="3.40.1280.10:FF:000001">
    <property type="entry name" value="tRNA (guanine-N(1)-)-methyltransferase"/>
    <property type="match status" value="1"/>
</dbReference>
<dbReference type="Gene3D" id="3.40.1280.10">
    <property type="match status" value="1"/>
</dbReference>
<dbReference type="Gene3D" id="1.10.1270.20">
    <property type="entry name" value="tRNA(m1g37)methyltransferase, domain 2"/>
    <property type="match status" value="1"/>
</dbReference>
<dbReference type="HAMAP" id="MF_00605">
    <property type="entry name" value="TrmD"/>
    <property type="match status" value="1"/>
</dbReference>
<dbReference type="InterPro" id="IPR029028">
    <property type="entry name" value="Alpha/beta_knot_MTases"/>
</dbReference>
<dbReference type="InterPro" id="IPR023148">
    <property type="entry name" value="tRNA_m1G_MeTrfase_C_sf"/>
</dbReference>
<dbReference type="InterPro" id="IPR002649">
    <property type="entry name" value="tRNA_m1G_MeTrfase_TrmD"/>
</dbReference>
<dbReference type="InterPro" id="IPR029026">
    <property type="entry name" value="tRNA_m1G_MTases_N"/>
</dbReference>
<dbReference type="InterPro" id="IPR016009">
    <property type="entry name" value="tRNA_MeTrfase_TRMD/TRM10"/>
</dbReference>
<dbReference type="NCBIfam" id="NF000648">
    <property type="entry name" value="PRK00026.1"/>
    <property type="match status" value="1"/>
</dbReference>
<dbReference type="NCBIfam" id="TIGR00088">
    <property type="entry name" value="trmD"/>
    <property type="match status" value="1"/>
</dbReference>
<dbReference type="PANTHER" id="PTHR46417">
    <property type="entry name" value="TRNA (GUANINE-N(1)-)-METHYLTRANSFERASE"/>
    <property type="match status" value="1"/>
</dbReference>
<dbReference type="PANTHER" id="PTHR46417:SF1">
    <property type="entry name" value="TRNA (GUANINE-N(1)-)-METHYLTRANSFERASE"/>
    <property type="match status" value="1"/>
</dbReference>
<dbReference type="Pfam" id="PF01746">
    <property type="entry name" value="tRNA_m1G_MT"/>
    <property type="match status" value="1"/>
</dbReference>
<dbReference type="PIRSF" id="PIRSF000386">
    <property type="entry name" value="tRNA_mtase"/>
    <property type="match status" value="1"/>
</dbReference>
<dbReference type="SUPFAM" id="SSF75217">
    <property type="entry name" value="alpha/beta knot"/>
    <property type="match status" value="1"/>
</dbReference>
<gene>
    <name evidence="1" type="primary">trmD</name>
    <name type="ordered locus">LJ_1513</name>
</gene>